<name>RL20_SHISS</name>
<proteinExistence type="inferred from homology"/>
<evidence type="ECO:0000255" key="1">
    <source>
        <dbReference type="HAMAP-Rule" id="MF_00382"/>
    </source>
</evidence>
<evidence type="ECO:0000305" key="2"/>
<comment type="function">
    <text evidence="1">Binds directly to 23S ribosomal RNA and is necessary for the in vitro assembly process of the 50S ribosomal subunit. It is not involved in the protein synthesizing functions of that subunit.</text>
</comment>
<comment type="similarity">
    <text evidence="1">Belongs to the bacterial ribosomal protein bL20 family.</text>
</comment>
<organism>
    <name type="scientific">Shigella sonnei (strain Ss046)</name>
    <dbReference type="NCBI Taxonomy" id="300269"/>
    <lineage>
        <taxon>Bacteria</taxon>
        <taxon>Pseudomonadati</taxon>
        <taxon>Pseudomonadota</taxon>
        <taxon>Gammaproteobacteria</taxon>
        <taxon>Enterobacterales</taxon>
        <taxon>Enterobacteriaceae</taxon>
        <taxon>Shigella</taxon>
    </lineage>
</organism>
<dbReference type="EMBL" id="CP000038">
    <property type="protein sequence ID" value="AAZ88148.1"/>
    <property type="molecule type" value="Genomic_DNA"/>
</dbReference>
<dbReference type="RefSeq" id="WP_000124850.1">
    <property type="nucleotide sequence ID" value="NC_007384.1"/>
</dbReference>
<dbReference type="SMR" id="Q3Z264"/>
<dbReference type="GeneID" id="98388757"/>
<dbReference type="KEGG" id="ssn:SSON_1442"/>
<dbReference type="HOGENOM" id="CLU_123265_0_1_6"/>
<dbReference type="Proteomes" id="UP000002529">
    <property type="component" value="Chromosome"/>
</dbReference>
<dbReference type="GO" id="GO:1990904">
    <property type="term" value="C:ribonucleoprotein complex"/>
    <property type="evidence" value="ECO:0007669"/>
    <property type="project" value="UniProtKB-KW"/>
</dbReference>
<dbReference type="GO" id="GO:0005840">
    <property type="term" value="C:ribosome"/>
    <property type="evidence" value="ECO:0007669"/>
    <property type="project" value="UniProtKB-KW"/>
</dbReference>
<dbReference type="GO" id="GO:0019843">
    <property type="term" value="F:rRNA binding"/>
    <property type="evidence" value="ECO:0007669"/>
    <property type="project" value="UniProtKB-UniRule"/>
</dbReference>
<dbReference type="GO" id="GO:0003735">
    <property type="term" value="F:structural constituent of ribosome"/>
    <property type="evidence" value="ECO:0007669"/>
    <property type="project" value="InterPro"/>
</dbReference>
<dbReference type="GO" id="GO:0000027">
    <property type="term" value="P:ribosomal large subunit assembly"/>
    <property type="evidence" value="ECO:0007669"/>
    <property type="project" value="UniProtKB-UniRule"/>
</dbReference>
<dbReference type="GO" id="GO:0006412">
    <property type="term" value="P:translation"/>
    <property type="evidence" value="ECO:0007669"/>
    <property type="project" value="InterPro"/>
</dbReference>
<dbReference type="CDD" id="cd07026">
    <property type="entry name" value="Ribosomal_L20"/>
    <property type="match status" value="1"/>
</dbReference>
<dbReference type="FunFam" id="1.10.1900.20:FF:000001">
    <property type="entry name" value="50S ribosomal protein L20"/>
    <property type="match status" value="1"/>
</dbReference>
<dbReference type="Gene3D" id="6.10.160.10">
    <property type="match status" value="1"/>
</dbReference>
<dbReference type="Gene3D" id="1.10.1900.20">
    <property type="entry name" value="Ribosomal protein L20"/>
    <property type="match status" value="1"/>
</dbReference>
<dbReference type="HAMAP" id="MF_00382">
    <property type="entry name" value="Ribosomal_bL20"/>
    <property type="match status" value="1"/>
</dbReference>
<dbReference type="InterPro" id="IPR005813">
    <property type="entry name" value="Ribosomal_bL20"/>
</dbReference>
<dbReference type="InterPro" id="IPR049946">
    <property type="entry name" value="RIBOSOMAL_L20_CS"/>
</dbReference>
<dbReference type="InterPro" id="IPR035566">
    <property type="entry name" value="Ribosomal_protein_bL20_C"/>
</dbReference>
<dbReference type="NCBIfam" id="TIGR01032">
    <property type="entry name" value="rplT_bact"/>
    <property type="match status" value="1"/>
</dbReference>
<dbReference type="PANTHER" id="PTHR10986">
    <property type="entry name" value="39S RIBOSOMAL PROTEIN L20"/>
    <property type="match status" value="1"/>
</dbReference>
<dbReference type="Pfam" id="PF00453">
    <property type="entry name" value="Ribosomal_L20"/>
    <property type="match status" value="1"/>
</dbReference>
<dbReference type="PRINTS" id="PR00062">
    <property type="entry name" value="RIBOSOMALL20"/>
</dbReference>
<dbReference type="SUPFAM" id="SSF74731">
    <property type="entry name" value="Ribosomal protein L20"/>
    <property type="match status" value="1"/>
</dbReference>
<dbReference type="PROSITE" id="PS00937">
    <property type="entry name" value="RIBOSOMAL_L20"/>
    <property type="match status" value="1"/>
</dbReference>
<feature type="chain" id="PRO_0000243736" description="Large ribosomal subunit protein bL20">
    <location>
        <begin position="1"/>
        <end position="118"/>
    </location>
</feature>
<reference key="1">
    <citation type="journal article" date="2005" name="Nucleic Acids Res.">
        <title>Genome dynamics and diversity of Shigella species, the etiologic agents of bacillary dysentery.</title>
        <authorList>
            <person name="Yang F."/>
            <person name="Yang J."/>
            <person name="Zhang X."/>
            <person name="Chen L."/>
            <person name="Jiang Y."/>
            <person name="Yan Y."/>
            <person name="Tang X."/>
            <person name="Wang J."/>
            <person name="Xiong Z."/>
            <person name="Dong J."/>
            <person name="Xue Y."/>
            <person name="Zhu Y."/>
            <person name="Xu X."/>
            <person name="Sun L."/>
            <person name="Chen S."/>
            <person name="Nie H."/>
            <person name="Peng J."/>
            <person name="Xu J."/>
            <person name="Wang Y."/>
            <person name="Yuan Z."/>
            <person name="Wen Y."/>
            <person name="Yao Z."/>
            <person name="Shen Y."/>
            <person name="Qiang B."/>
            <person name="Hou Y."/>
            <person name="Yu J."/>
            <person name="Jin Q."/>
        </authorList>
    </citation>
    <scope>NUCLEOTIDE SEQUENCE [LARGE SCALE GENOMIC DNA]</scope>
    <source>
        <strain>Ss046</strain>
    </source>
</reference>
<sequence>MARVKRGVIARARHKKILKQAKGYYGARSRVYRVAFQAVIKAGQYAYRDRRQRKRQFRQLWIARINAAARQNGISYSKFINGLKKASVEIDRKILADIAVFDKVAFTALVEKAKAALA</sequence>
<protein>
    <recommendedName>
        <fullName evidence="1">Large ribosomal subunit protein bL20</fullName>
    </recommendedName>
    <alternativeName>
        <fullName evidence="2">50S ribosomal protein L20</fullName>
    </alternativeName>
</protein>
<keyword id="KW-1185">Reference proteome</keyword>
<keyword id="KW-0687">Ribonucleoprotein</keyword>
<keyword id="KW-0689">Ribosomal protein</keyword>
<keyword id="KW-0694">RNA-binding</keyword>
<keyword id="KW-0699">rRNA-binding</keyword>
<accession>Q3Z264</accession>
<gene>
    <name evidence="1" type="primary">rplT</name>
    <name type="ordered locus">SSON_1442</name>
</gene>